<comment type="function">
    <text evidence="1">Catalyzes the irreversible transfer of a propylamine group from the amino donor S-adenosylmethioninamine (decarboxy-AdoMet) to putrescine (1,4-diaminobutane) to yield spermidine.</text>
</comment>
<comment type="catalytic activity">
    <reaction evidence="1">
        <text>S-adenosyl 3-(methylsulfanyl)propylamine + putrescine = S-methyl-5'-thioadenosine + spermidine + H(+)</text>
        <dbReference type="Rhea" id="RHEA:12721"/>
        <dbReference type="ChEBI" id="CHEBI:15378"/>
        <dbReference type="ChEBI" id="CHEBI:17509"/>
        <dbReference type="ChEBI" id="CHEBI:57443"/>
        <dbReference type="ChEBI" id="CHEBI:57834"/>
        <dbReference type="ChEBI" id="CHEBI:326268"/>
        <dbReference type="EC" id="2.5.1.16"/>
    </reaction>
</comment>
<comment type="pathway">
    <text evidence="1">Amine and polyamine biosynthesis; spermidine biosynthesis; spermidine from putrescine: step 1/1.</text>
</comment>
<comment type="subunit">
    <text evidence="1">Homodimer or homotetramer.</text>
</comment>
<comment type="subcellular location">
    <subcellularLocation>
        <location evidence="1">Cytoplasm</location>
    </subcellularLocation>
</comment>
<comment type="similarity">
    <text evidence="1">Belongs to the spermidine/spermine synthase family.</text>
</comment>
<gene>
    <name evidence="1" type="primary">speE</name>
    <name type="ordered locus">P9215_19581</name>
</gene>
<keyword id="KW-0963">Cytoplasm</keyword>
<keyword id="KW-0620">Polyamine biosynthesis</keyword>
<keyword id="KW-0745">Spermidine biosynthesis</keyword>
<keyword id="KW-0808">Transferase</keyword>
<proteinExistence type="inferred from homology"/>
<feature type="chain" id="PRO_1000058553" description="Polyamine aminopropyltransferase">
    <location>
        <begin position="1"/>
        <end position="283"/>
    </location>
</feature>
<feature type="domain" description="PABS" evidence="1">
    <location>
        <begin position="5"/>
        <end position="238"/>
    </location>
</feature>
<feature type="active site" description="Proton acceptor" evidence="1">
    <location>
        <position position="158"/>
    </location>
</feature>
<feature type="binding site" evidence="1">
    <location>
        <position position="32"/>
    </location>
    <ligand>
        <name>S-methyl-5'-thioadenosine</name>
        <dbReference type="ChEBI" id="CHEBI:17509"/>
    </ligand>
</feature>
<feature type="binding site" evidence="1">
    <location>
        <position position="63"/>
    </location>
    <ligand>
        <name>spermidine</name>
        <dbReference type="ChEBI" id="CHEBI:57834"/>
    </ligand>
</feature>
<feature type="binding site" evidence="1">
    <location>
        <position position="87"/>
    </location>
    <ligand>
        <name>spermidine</name>
        <dbReference type="ChEBI" id="CHEBI:57834"/>
    </ligand>
</feature>
<feature type="binding site" evidence="1">
    <location>
        <position position="107"/>
    </location>
    <ligand>
        <name>S-methyl-5'-thioadenosine</name>
        <dbReference type="ChEBI" id="CHEBI:17509"/>
    </ligand>
</feature>
<feature type="binding site" evidence="1">
    <location>
        <begin position="139"/>
        <end position="140"/>
    </location>
    <ligand>
        <name>S-methyl-5'-thioadenosine</name>
        <dbReference type="ChEBI" id="CHEBI:17509"/>
    </ligand>
</feature>
<feature type="binding site" evidence="1">
    <location>
        <begin position="158"/>
        <end position="161"/>
    </location>
    <ligand>
        <name>spermidine</name>
        <dbReference type="ChEBI" id="CHEBI:57834"/>
    </ligand>
</feature>
<accession>A8G7J0</accession>
<protein>
    <recommendedName>
        <fullName evidence="1">Polyamine aminopropyltransferase</fullName>
    </recommendedName>
    <alternativeName>
        <fullName evidence="1">Putrescine aminopropyltransferase</fullName>
        <shortName evidence="1">PAPT</shortName>
    </alternativeName>
    <alternativeName>
        <fullName evidence="1">Spermidine synthase</fullName>
        <shortName evidence="1">SPDS</shortName>
        <shortName evidence="1">SPDSY</shortName>
        <ecNumber evidence="1">2.5.1.16</ecNumber>
    </alternativeName>
</protein>
<sequence length="283" mass="32641">MTNITTWIDEYHKGSRFGLNGKILIKKTSKYQEIILIENEYYGKALMLDGCWMTSLKDEKYYHECLVHPALSSIEEKSNILIIGGGDGGTVRECVKYSQISKIDLVEIDEEVIKISKKFLKEIGGEAWNDKRLEIHVDDGVKWVKKTRDNFYDVIFIDSSDPSEFSNLLFSDSFYKECKRILTPSGILATQSESPESFKNIHINILKTLKNIFKSSETMYSFVPIYPSGIWSWTFASSKNLNLSKQNYDEVKKIEKGCEIWNLNFQNAAFKMMPNKIVKELDS</sequence>
<organism>
    <name type="scientific">Prochlorococcus marinus (strain MIT 9215)</name>
    <dbReference type="NCBI Taxonomy" id="93060"/>
    <lineage>
        <taxon>Bacteria</taxon>
        <taxon>Bacillati</taxon>
        <taxon>Cyanobacteriota</taxon>
        <taxon>Cyanophyceae</taxon>
        <taxon>Synechococcales</taxon>
        <taxon>Prochlorococcaceae</taxon>
        <taxon>Prochlorococcus</taxon>
    </lineage>
</organism>
<reference key="1">
    <citation type="journal article" date="2007" name="PLoS Genet.">
        <title>Patterns and implications of gene gain and loss in the evolution of Prochlorococcus.</title>
        <authorList>
            <person name="Kettler G.C."/>
            <person name="Martiny A.C."/>
            <person name="Huang K."/>
            <person name="Zucker J."/>
            <person name="Coleman M.L."/>
            <person name="Rodrigue S."/>
            <person name="Chen F."/>
            <person name="Lapidus A."/>
            <person name="Ferriera S."/>
            <person name="Johnson J."/>
            <person name="Steglich C."/>
            <person name="Church G.M."/>
            <person name="Richardson P."/>
            <person name="Chisholm S.W."/>
        </authorList>
    </citation>
    <scope>NUCLEOTIDE SEQUENCE [LARGE SCALE GENOMIC DNA]</scope>
    <source>
        <strain>MIT 9215</strain>
    </source>
</reference>
<dbReference type="EC" id="2.5.1.16" evidence="1"/>
<dbReference type="EMBL" id="CP000825">
    <property type="protein sequence ID" value="ABV51571.1"/>
    <property type="molecule type" value="Genomic_DNA"/>
</dbReference>
<dbReference type="RefSeq" id="WP_012008558.1">
    <property type="nucleotide sequence ID" value="NC_009840.1"/>
</dbReference>
<dbReference type="SMR" id="A8G7J0"/>
<dbReference type="STRING" id="93060.P9215_19581"/>
<dbReference type="KEGG" id="pmh:P9215_19581"/>
<dbReference type="eggNOG" id="COG0421">
    <property type="taxonomic scope" value="Bacteria"/>
</dbReference>
<dbReference type="HOGENOM" id="CLU_048199_0_0_3"/>
<dbReference type="OrthoDB" id="9793120at2"/>
<dbReference type="UniPathway" id="UPA00248">
    <property type="reaction ID" value="UER00314"/>
</dbReference>
<dbReference type="Proteomes" id="UP000002014">
    <property type="component" value="Chromosome"/>
</dbReference>
<dbReference type="GO" id="GO:0005737">
    <property type="term" value="C:cytoplasm"/>
    <property type="evidence" value="ECO:0007669"/>
    <property type="project" value="UniProtKB-SubCell"/>
</dbReference>
<dbReference type="GO" id="GO:0004766">
    <property type="term" value="F:spermidine synthase activity"/>
    <property type="evidence" value="ECO:0007669"/>
    <property type="project" value="UniProtKB-UniRule"/>
</dbReference>
<dbReference type="GO" id="GO:0008295">
    <property type="term" value="P:spermidine biosynthetic process"/>
    <property type="evidence" value="ECO:0007669"/>
    <property type="project" value="UniProtKB-UniRule"/>
</dbReference>
<dbReference type="CDD" id="cd02440">
    <property type="entry name" value="AdoMet_MTases"/>
    <property type="match status" value="1"/>
</dbReference>
<dbReference type="Gene3D" id="2.30.140.10">
    <property type="entry name" value="Spermidine synthase, tetramerisation domain"/>
    <property type="match status" value="1"/>
</dbReference>
<dbReference type="Gene3D" id="3.40.50.150">
    <property type="entry name" value="Vaccinia Virus protein VP39"/>
    <property type="match status" value="1"/>
</dbReference>
<dbReference type="HAMAP" id="MF_00198">
    <property type="entry name" value="Spermidine_synth"/>
    <property type="match status" value="1"/>
</dbReference>
<dbReference type="InterPro" id="IPR030374">
    <property type="entry name" value="PABS"/>
</dbReference>
<dbReference type="InterPro" id="IPR030373">
    <property type="entry name" value="PABS_CS"/>
</dbReference>
<dbReference type="InterPro" id="IPR029063">
    <property type="entry name" value="SAM-dependent_MTases_sf"/>
</dbReference>
<dbReference type="InterPro" id="IPR001045">
    <property type="entry name" value="Spermi_synthase"/>
</dbReference>
<dbReference type="InterPro" id="IPR035246">
    <property type="entry name" value="Spermidine_synt_N"/>
</dbReference>
<dbReference type="InterPro" id="IPR037163">
    <property type="entry name" value="Spermidine_synt_N_sf"/>
</dbReference>
<dbReference type="NCBIfam" id="NF002010">
    <property type="entry name" value="PRK00811.1"/>
    <property type="match status" value="1"/>
</dbReference>
<dbReference type="PANTHER" id="PTHR11558:SF11">
    <property type="entry name" value="SPERMIDINE SYNTHASE"/>
    <property type="match status" value="1"/>
</dbReference>
<dbReference type="PANTHER" id="PTHR11558">
    <property type="entry name" value="SPERMIDINE/SPERMINE SYNTHASE"/>
    <property type="match status" value="1"/>
</dbReference>
<dbReference type="Pfam" id="PF17284">
    <property type="entry name" value="Spermine_synt_N"/>
    <property type="match status" value="1"/>
</dbReference>
<dbReference type="Pfam" id="PF01564">
    <property type="entry name" value="Spermine_synth"/>
    <property type="match status" value="1"/>
</dbReference>
<dbReference type="SUPFAM" id="SSF53335">
    <property type="entry name" value="S-adenosyl-L-methionine-dependent methyltransferases"/>
    <property type="match status" value="1"/>
</dbReference>
<dbReference type="PROSITE" id="PS01330">
    <property type="entry name" value="PABS_1"/>
    <property type="match status" value="1"/>
</dbReference>
<dbReference type="PROSITE" id="PS51006">
    <property type="entry name" value="PABS_2"/>
    <property type="match status" value="1"/>
</dbReference>
<evidence type="ECO:0000255" key="1">
    <source>
        <dbReference type="HAMAP-Rule" id="MF_00198"/>
    </source>
</evidence>
<name>SPEE_PROM2</name>